<organism>
    <name type="scientific">Malus domestica</name>
    <name type="common">Apple</name>
    <name type="synonym">Pyrus malus</name>
    <dbReference type="NCBI Taxonomy" id="3750"/>
    <lineage>
        <taxon>Eukaryota</taxon>
        <taxon>Viridiplantae</taxon>
        <taxon>Streptophyta</taxon>
        <taxon>Embryophyta</taxon>
        <taxon>Tracheophyta</taxon>
        <taxon>Spermatophyta</taxon>
        <taxon>Magnoliopsida</taxon>
        <taxon>eudicotyledons</taxon>
        <taxon>Gunneridae</taxon>
        <taxon>Pentapetalae</taxon>
        <taxon>rosids</taxon>
        <taxon>fabids</taxon>
        <taxon>Rosales</taxon>
        <taxon>Rosaceae</taxon>
        <taxon>Amygdaloideae</taxon>
        <taxon>Maleae</taxon>
        <taxon>Malus</taxon>
    </lineage>
</organism>
<accession>Q9M5X7</accession>
<accession>Q9LED0</accession>
<comment type="function">
    <text evidence="1">Plant non-specific lipid-transfer proteins transfer phospholipids as well as galactolipids across membranes. May play a role in wax or cutin deposition in the cell walls of expanding epidermal cells and certain secretory tissues (By similarity).</text>
</comment>
<comment type="allergen">
    <text>Causes an allergic reaction in human.</text>
</comment>
<comment type="similarity">
    <text evidence="3">Belongs to the plant LTP family.</text>
</comment>
<protein>
    <recommendedName>
        <fullName>Non-specific lipid-transfer protein</fullName>
        <shortName>LTP</shortName>
    </recommendedName>
    <allergenName>Mal d 3</allergenName>
</protein>
<evidence type="ECO:0000250" key="1"/>
<evidence type="ECO:0000255" key="2"/>
<evidence type="ECO:0000305" key="3"/>
<proteinExistence type="evidence at protein level"/>
<gene>
    <name type="primary">MALD3</name>
</gene>
<sequence length="115" mass="11410">MASSAVTKLALVVALCMAVSVAHAITCGQVTSSLAPCIGYVRSGGAVPPACCNGIRTINGLARTTADRQTACNCLKNLAGSISGVNPNNAAGLPGKCGVNVPYKISTSTNCATVK</sequence>
<feature type="signal peptide" evidence="2">
    <location>
        <begin position="1"/>
        <end position="24"/>
    </location>
</feature>
<feature type="chain" id="PRO_0000018390" description="Non-specific lipid-transfer protein">
    <location>
        <begin position="25"/>
        <end position="115"/>
    </location>
</feature>
<feature type="disulfide bond" evidence="1">
    <location>
        <begin position="27"/>
        <end position="74"/>
    </location>
</feature>
<feature type="disulfide bond" evidence="1">
    <location>
        <begin position="37"/>
        <end position="51"/>
    </location>
</feature>
<feature type="disulfide bond" evidence="1">
    <location>
        <begin position="52"/>
        <end position="97"/>
    </location>
</feature>
<feature type="disulfide bond" evidence="1">
    <location>
        <begin position="72"/>
        <end position="111"/>
    </location>
</feature>
<reference key="1">
    <citation type="submission" date="2000-01" db="EMBL/GenBank/DDBJ databases">
        <title>Cloning of a cDNA encoding a lipid transfer protein as a potential allergen from Malus domestica.</title>
        <authorList>
            <person name="Scheurer S."/>
            <person name="Wangorsch A."/>
            <person name="Haustein D."/>
            <person name="Vieths S."/>
        </authorList>
    </citation>
    <scope>NUCLEOTIDE SEQUENCE [MRNA]</scope>
    <source>
        <strain>cv. Golden Delicious</strain>
    </source>
</reference>
<reference key="2">
    <citation type="submission" date="2000-04" db="EMBL/GenBank/DDBJ databases">
        <title>Cloning of a cDNA encoding a major allergen and lipid transfer protein, from Malus domestica.</title>
        <authorList>
            <person name="Diaz-Perales A."/>
            <person name="Garcia-Casado G."/>
            <person name="Sanchez-Monge R."/>
            <person name="Barber D."/>
            <person name="Salcedo G."/>
        </authorList>
    </citation>
    <scope>NUCLEOTIDE SEQUENCE [MRNA] OF 25-115</scope>
</reference>
<dbReference type="EMBL" id="AF221502">
    <property type="protein sequence ID" value="AAF26450.1"/>
    <property type="molecule type" value="mRNA"/>
</dbReference>
<dbReference type="EMBL" id="AJ277164">
    <property type="protein sequence ID" value="CAB96874.1"/>
    <property type="molecule type" value="mRNA"/>
</dbReference>
<dbReference type="RefSeq" id="NP_001281295.1">
    <property type="nucleotide sequence ID" value="NM_001294366.1"/>
</dbReference>
<dbReference type="SMR" id="Q9M5X7"/>
<dbReference type="Allergome" id="466">
    <property type="allergen name" value="Mal d 3"/>
</dbReference>
<dbReference type="EnsemblPlants" id="mRNA:MD12G0154500">
    <property type="protein sequence ID" value="mRNA:MD12G0154500"/>
    <property type="gene ID" value="MD12G0154500"/>
</dbReference>
<dbReference type="GeneID" id="103450745"/>
<dbReference type="Gramene" id="mRNA:MD12G0154500">
    <property type="protein sequence ID" value="mRNA:MD12G0154500"/>
    <property type="gene ID" value="MD12G0154500"/>
</dbReference>
<dbReference type="KEGG" id="mdm:103450745"/>
<dbReference type="OrthoDB" id="1890443at2759"/>
<dbReference type="GO" id="GO:0008289">
    <property type="term" value="F:lipid binding"/>
    <property type="evidence" value="ECO:0007669"/>
    <property type="project" value="UniProtKB-KW"/>
</dbReference>
<dbReference type="GO" id="GO:0006869">
    <property type="term" value="P:lipid transport"/>
    <property type="evidence" value="ECO:0007669"/>
    <property type="project" value="InterPro"/>
</dbReference>
<dbReference type="CDD" id="cd01960">
    <property type="entry name" value="nsLTP1"/>
    <property type="match status" value="1"/>
</dbReference>
<dbReference type="FunFam" id="1.10.110.10:FF:000002">
    <property type="entry name" value="Non-specific lipid-transfer protein"/>
    <property type="match status" value="1"/>
</dbReference>
<dbReference type="Gene3D" id="1.10.110.10">
    <property type="entry name" value="Plant lipid-transfer and hydrophobic proteins"/>
    <property type="match status" value="1"/>
</dbReference>
<dbReference type="InterPro" id="IPR036312">
    <property type="entry name" value="Bifun_inhib/LTP/seed_sf"/>
</dbReference>
<dbReference type="InterPro" id="IPR016140">
    <property type="entry name" value="Bifunc_inhib/LTP/seed_store"/>
</dbReference>
<dbReference type="InterPro" id="IPR000528">
    <property type="entry name" value="Plant_nsLTP"/>
</dbReference>
<dbReference type="PANTHER" id="PTHR33076">
    <property type="entry name" value="NON-SPECIFIC LIPID-TRANSFER PROTEIN 2-RELATED"/>
    <property type="match status" value="1"/>
</dbReference>
<dbReference type="Pfam" id="PF00234">
    <property type="entry name" value="Tryp_alpha_amyl"/>
    <property type="match status" value="1"/>
</dbReference>
<dbReference type="PRINTS" id="PR00382">
    <property type="entry name" value="LIPIDTRNSFER"/>
</dbReference>
<dbReference type="SMART" id="SM00499">
    <property type="entry name" value="AAI"/>
    <property type="match status" value="1"/>
</dbReference>
<dbReference type="SUPFAM" id="SSF47699">
    <property type="entry name" value="Bifunctional inhibitor/lipid-transfer protein/seed storage 2S albumin"/>
    <property type="match status" value="1"/>
</dbReference>
<dbReference type="PROSITE" id="PS00597">
    <property type="entry name" value="PLANT_LTP"/>
    <property type="match status" value="1"/>
</dbReference>
<name>NLTP_MALDO</name>
<keyword id="KW-0020">Allergen</keyword>
<keyword id="KW-1015">Disulfide bond</keyword>
<keyword id="KW-0446">Lipid-binding</keyword>
<keyword id="KW-0732">Signal</keyword>
<keyword id="KW-0813">Transport</keyword>